<protein>
    <recommendedName>
        <fullName evidence="1">Adenine deaminase</fullName>
        <shortName evidence="1">ADE</shortName>
        <ecNumber evidence="1">3.5.4.2</ecNumber>
    </recommendedName>
    <alternativeName>
        <fullName evidence="1">Adenine aminohydrolase</fullName>
        <shortName evidence="1">AAH</shortName>
    </alternativeName>
</protein>
<comment type="function">
    <text evidence="1">Catalyzes the hydrolytic deamination of adenine to hypoxanthine. Plays an important role in the purine salvage pathway and in nitrogen catabolism.</text>
</comment>
<comment type="catalytic activity">
    <reaction evidence="1">
        <text>adenine + H2O + H(+) = hypoxanthine + NH4(+)</text>
        <dbReference type="Rhea" id="RHEA:23688"/>
        <dbReference type="ChEBI" id="CHEBI:15377"/>
        <dbReference type="ChEBI" id="CHEBI:15378"/>
        <dbReference type="ChEBI" id="CHEBI:16708"/>
        <dbReference type="ChEBI" id="CHEBI:17368"/>
        <dbReference type="ChEBI" id="CHEBI:28938"/>
        <dbReference type="EC" id="3.5.4.2"/>
    </reaction>
</comment>
<comment type="cofactor">
    <cofactor evidence="1">
        <name>Zn(2+)</name>
        <dbReference type="ChEBI" id="CHEBI:29105"/>
    </cofactor>
    <text evidence="1">Binds 1 zinc ion per subunit.</text>
</comment>
<comment type="similarity">
    <text evidence="1">Belongs to the metallo-dependent hydrolases superfamily. Adenosine and AMP deaminases family. Adenine deaminase type 2 subfamily.</text>
</comment>
<accession>B5ZXI3</accession>
<feature type="chain" id="PRO_1000128859" description="Adenine deaminase">
    <location>
        <begin position="1"/>
        <end position="322"/>
    </location>
</feature>
<feature type="active site" description="Proton donor" evidence="1">
    <location>
        <position position="192"/>
    </location>
</feature>
<feature type="binding site" evidence="1">
    <location>
        <position position="11"/>
    </location>
    <ligand>
        <name>Zn(2+)</name>
        <dbReference type="ChEBI" id="CHEBI:29105"/>
        <note>catalytic</note>
    </ligand>
</feature>
<feature type="binding site" evidence="1">
    <location>
        <position position="13"/>
    </location>
    <ligand>
        <name>Zn(2+)</name>
        <dbReference type="ChEBI" id="CHEBI:29105"/>
        <note>catalytic</note>
    </ligand>
</feature>
<feature type="binding site" evidence="1">
    <location>
        <position position="189"/>
    </location>
    <ligand>
        <name>Zn(2+)</name>
        <dbReference type="ChEBI" id="CHEBI:29105"/>
        <note>catalytic</note>
    </ligand>
</feature>
<feature type="binding site" evidence="1">
    <location>
        <position position="270"/>
    </location>
    <ligand>
        <name>Zn(2+)</name>
        <dbReference type="ChEBI" id="CHEBI:29105"/>
        <note>catalytic</note>
    </ligand>
</feature>
<feature type="binding site" evidence="1">
    <location>
        <position position="271"/>
    </location>
    <ligand>
        <name>substrate</name>
    </ligand>
</feature>
<feature type="site" description="Important for catalytic activity" evidence="1">
    <location>
        <position position="213"/>
    </location>
</feature>
<name>ADE_RHILW</name>
<sequence length="322" mass="34849">MTLHLKKVELHCHLEGAAPPELTAAQARKYGVDISGELRGGAYVWHDFASFLECYDKVSEVYRTEEDYARLTETYLDELAGINTIYSELIVSPDHGKRIGLGADAYISGICEGIRRAREKSGIEARLIVTGERHFGPESVIGAAEYAAKAGNPLITGFNLAGEERMGRVADYARAFDIARDAGLGLTIHAGEVCGAFSVADALDAVHPSRIGHGVRAVEDVDLVKRLADLGTVLEVCPGSNIALGVFPDFASHPLRRLKEAGVRVTISSDDPPFFHTSLAREYELAAEAFGFSDAEIDAMTRTAIEAAFVDEETRKALLARL</sequence>
<dbReference type="EC" id="3.5.4.2" evidence="1"/>
<dbReference type="EMBL" id="CP001191">
    <property type="protein sequence ID" value="ACI57442.1"/>
    <property type="molecule type" value="Genomic_DNA"/>
</dbReference>
<dbReference type="RefSeq" id="WP_012559570.1">
    <property type="nucleotide sequence ID" value="NC_011369.1"/>
</dbReference>
<dbReference type="SMR" id="B5ZXI3"/>
<dbReference type="STRING" id="395492.Rleg2_4180"/>
<dbReference type="KEGG" id="rlt:Rleg2_4180"/>
<dbReference type="eggNOG" id="COG1816">
    <property type="taxonomic scope" value="Bacteria"/>
</dbReference>
<dbReference type="HOGENOM" id="CLU_039228_7_1_5"/>
<dbReference type="Proteomes" id="UP000008330">
    <property type="component" value="Chromosome"/>
</dbReference>
<dbReference type="GO" id="GO:0000034">
    <property type="term" value="F:adenine deaminase activity"/>
    <property type="evidence" value="ECO:0007669"/>
    <property type="project" value="UniProtKB-UniRule"/>
</dbReference>
<dbReference type="GO" id="GO:0008270">
    <property type="term" value="F:zinc ion binding"/>
    <property type="evidence" value="ECO:0007669"/>
    <property type="project" value="UniProtKB-UniRule"/>
</dbReference>
<dbReference type="GO" id="GO:0006146">
    <property type="term" value="P:adenine catabolic process"/>
    <property type="evidence" value="ECO:0007669"/>
    <property type="project" value="UniProtKB-UniRule"/>
</dbReference>
<dbReference type="GO" id="GO:0043103">
    <property type="term" value="P:hypoxanthine salvage"/>
    <property type="evidence" value="ECO:0007669"/>
    <property type="project" value="UniProtKB-UniRule"/>
</dbReference>
<dbReference type="GO" id="GO:0009117">
    <property type="term" value="P:nucleotide metabolic process"/>
    <property type="evidence" value="ECO:0007669"/>
    <property type="project" value="UniProtKB-KW"/>
</dbReference>
<dbReference type="CDD" id="cd01320">
    <property type="entry name" value="ADA"/>
    <property type="match status" value="1"/>
</dbReference>
<dbReference type="Gene3D" id="3.20.20.140">
    <property type="entry name" value="Metal-dependent hydrolases"/>
    <property type="match status" value="1"/>
</dbReference>
<dbReference type="HAMAP" id="MF_01962">
    <property type="entry name" value="Adenine_deaminase"/>
    <property type="match status" value="1"/>
</dbReference>
<dbReference type="InterPro" id="IPR001365">
    <property type="entry name" value="A_deaminase_dom"/>
</dbReference>
<dbReference type="InterPro" id="IPR028892">
    <property type="entry name" value="ADE"/>
</dbReference>
<dbReference type="InterPro" id="IPR006330">
    <property type="entry name" value="Ado/ade_deaminase"/>
</dbReference>
<dbReference type="InterPro" id="IPR032466">
    <property type="entry name" value="Metal_Hydrolase"/>
</dbReference>
<dbReference type="NCBIfam" id="TIGR01430">
    <property type="entry name" value="aden_deam"/>
    <property type="match status" value="1"/>
</dbReference>
<dbReference type="NCBIfam" id="NF006848">
    <property type="entry name" value="PRK09358.1-3"/>
    <property type="match status" value="1"/>
</dbReference>
<dbReference type="PANTHER" id="PTHR43114">
    <property type="entry name" value="ADENINE DEAMINASE"/>
    <property type="match status" value="1"/>
</dbReference>
<dbReference type="PANTHER" id="PTHR43114:SF6">
    <property type="entry name" value="ADENINE DEAMINASE"/>
    <property type="match status" value="1"/>
</dbReference>
<dbReference type="Pfam" id="PF00962">
    <property type="entry name" value="A_deaminase"/>
    <property type="match status" value="1"/>
</dbReference>
<dbReference type="SUPFAM" id="SSF51556">
    <property type="entry name" value="Metallo-dependent hydrolases"/>
    <property type="match status" value="1"/>
</dbReference>
<proteinExistence type="inferred from homology"/>
<keyword id="KW-0378">Hydrolase</keyword>
<keyword id="KW-0479">Metal-binding</keyword>
<keyword id="KW-0546">Nucleotide metabolism</keyword>
<keyword id="KW-1185">Reference proteome</keyword>
<keyword id="KW-0862">Zinc</keyword>
<organism>
    <name type="scientific">Rhizobium leguminosarum bv. trifolii (strain WSM2304)</name>
    <dbReference type="NCBI Taxonomy" id="395492"/>
    <lineage>
        <taxon>Bacteria</taxon>
        <taxon>Pseudomonadati</taxon>
        <taxon>Pseudomonadota</taxon>
        <taxon>Alphaproteobacteria</taxon>
        <taxon>Hyphomicrobiales</taxon>
        <taxon>Rhizobiaceae</taxon>
        <taxon>Rhizobium/Agrobacterium group</taxon>
        <taxon>Rhizobium</taxon>
    </lineage>
</organism>
<evidence type="ECO:0000255" key="1">
    <source>
        <dbReference type="HAMAP-Rule" id="MF_01962"/>
    </source>
</evidence>
<reference key="1">
    <citation type="journal article" date="2010" name="Stand. Genomic Sci.">
        <title>Complete genome sequence of Rhizobium leguminosarum bv trifolii strain WSM2304, an effective microsymbiont of the South American clover Trifolium polymorphum.</title>
        <authorList>
            <person name="Reeve W."/>
            <person name="O'Hara G."/>
            <person name="Chain P."/>
            <person name="Ardley J."/>
            <person name="Brau L."/>
            <person name="Nandesena K."/>
            <person name="Tiwari R."/>
            <person name="Malfatti S."/>
            <person name="Kiss H."/>
            <person name="Lapidus A."/>
            <person name="Copeland A."/>
            <person name="Nolan M."/>
            <person name="Land M."/>
            <person name="Ivanova N."/>
            <person name="Mavromatis K."/>
            <person name="Markowitz V."/>
            <person name="Kyrpides N."/>
            <person name="Melino V."/>
            <person name="Denton M."/>
            <person name="Yates R."/>
            <person name="Howieson J."/>
        </authorList>
    </citation>
    <scope>NUCLEOTIDE SEQUENCE [LARGE SCALE GENOMIC DNA]</scope>
    <source>
        <strain>WSM2304</strain>
    </source>
</reference>
<gene>
    <name type="ordered locus">Rleg2_4180</name>
</gene>